<proteinExistence type="predicted"/>
<comment type="similarity">
    <text evidence="2">To E.coli YghS and YghT.</text>
</comment>
<gene>
    <name type="primary">yghR</name>
    <name type="ordered locus">c3721</name>
</gene>
<evidence type="ECO:0000255" key="1"/>
<evidence type="ECO:0000305" key="2"/>
<accession>P64573</accession>
<accession>Q46842</accession>
<sequence>MDALQTQTVNSTTAPQPNYIPGLIAVVGCDGTGKSTLTTDLVKSLQQHWQTERRYLGLLSGEDGDKIKRLPLVGVWLERRLAAKSSKTQSMKTKSPALWAAVIMYCFSLRRMANLRKVQRLAQSGVLVVSDRFPQAEISGFYYDGPGIGVERATGKISMFLAQRERRLYQQMAQYRPELIIRLGIDIETAISRKPDHDYAELQDKIGVMSKIGYNGTKILEIDSRAPYSEVLEQAQKAVSLVAIVSDRRSLT</sequence>
<reference key="1">
    <citation type="journal article" date="2002" name="Proc. Natl. Acad. Sci. U.S.A.">
        <title>Extensive mosaic structure revealed by the complete genome sequence of uropathogenic Escherichia coli.</title>
        <authorList>
            <person name="Welch R.A."/>
            <person name="Burland V."/>
            <person name="Plunkett G. III"/>
            <person name="Redford P."/>
            <person name="Roesch P."/>
            <person name="Rasko D."/>
            <person name="Buckles E.L."/>
            <person name="Liou S.-R."/>
            <person name="Boutin A."/>
            <person name="Hackett J."/>
            <person name="Stroud D."/>
            <person name="Mayhew G.F."/>
            <person name="Rose D.J."/>
            <person name="Zhou S."/>
            <person name="Schwartz D.C."/>
            <person name="Perna N.T."/>
            <person name="Mobley H.L.T."/>
            <person name="Donnenberg M.S."/>
            <person name="Blattner F.R."/>
        </authorList>
    </citation>
    <scope>NUCLEOTIDE SEQUENCE [LARGE SCALE GENOMIC DNA]</scope>
    <source>
        <strain>CFT073 / ATCC 700928 / UPEC</strain>
    </source>
</reference>
<dbReference type="EMBL" id="AE014075">
    <property type="protein sequence ID" value="AAN82165.1"/>
    <property type="molecule type" value="Genomic_DNA"/>
</dbReference>
<dbReference type="RefSeq" id="WP_000339531.1">
    <property type="nucleotide sequence ID" value="NZ_CP051263.1"/>
</dbReference>
<dbReference type="SMR" id="P64573"/>
<dbReference type="STRING" id="199310.c3721"/>
<dbReference type="KEGG" id="ecc:c3721"/>
<dbReference type="eggNOG" id="COG0125">
    <property type="taxonomic scope" value="Bacteria"/>
</dbReference>
<dbReference type="HOGENOM" id="CLU_102178_0_0_6"/>
<dbReference type="BioCyc" id="ECOL199310:C3721-MONOMER"/>
<dbReference type="Proteomes" id="UP000001410">
    <property type="component" value="Chromosome"/>
</dbReference>
<dbReference type="GO" id="GO:0005524">
    <property type="term" value="F:ATP binding"/>
    <property type="evidence" value="ECO:0007669"/>
    <property type="project" value="UniProtKB-KW"/>
</dbReference>
<dbReference type="Gene3D" id="3.40.50.300">
    <property type="entry name" value="P-loop containing nucleotide triphosphate hydrolases"/>
    <property type="match status" value="1"/>
</dbReference>
<dbReference type="InterPro" id="IPR027417">
    <property type="entry name" value="P-loop_NTPase"/>
</dbReference>
<dbReference type="SUPFAM" id="SSF52540">
    <property type="entry name" value="P-loop containing nucleoside triphosphate hydrolases"/>
    <property type="match status" value="1"/>
</dbReference>
<keyword id="KW-0067">ATP-binding</keyword>
<keyword id="KW-0547">Nucleotide-binding</keyword>
<keyword id="KW-1185">Reference proteome</keyword>
<feature type="chain" id="PRO_0000169391" description="Uncharacterized ATP-binding protein YghR">
    <location>
        <begin position="1"/>
        <end position="252"/>
    </location>
</feature>
<feature type="binding site" evidence="1">
    <location>
        <begin position="28"/>
        <end position="35"/>
    </location>
    <ligand>
        <name>ATP</name>
        <dbReference type="ChEBI" id="CHEBI:30616"/>
    </ligand>
</feature>
<protein>
    <recommendedName>
        <fullName>Uncharacterized ATP-binding protein YghR</fullName>
    </recommendedName>
</protein>
<name>YGHR_ECOL6</name>
<organism>
    <name type="scientific">Escherichia coli O6:H1 (strain CFT073 / ATCC 700928 / UPEC)</name>
    <dbReference type="NCBI Taxonomy" id="199310"/>
    <lineage>
        <taxon>Bacteria</taxon>
        <taxon>Pseudomonadati</taxon>
        <taxon>Pseudomonadota</taxon>
        <taxon>Gammaproteobacteria</taxon>
        <taxon>Enterobacterales</taxon>
        <taxon>Enterobacteriaceae</taxon>
        <taxon>Escherichia</taxon>
    </lineage>
</organism>